<keyword id="KW-0004">4Fe-4S</keyword>
<keyword id="KW-0028">Amino-acid biosynthesis</keyword>
<keyword id="KW-0198">Cysteine biosynthesis</keyword>
<keyword id="KW-0349">Heme</keyword>
<keyword id="KW-0408">Iron</keyword>
<keyword id="KW-0411">Iron-sulfur</keyword>
<keyword id="KW-0479">Metal-binding</keyword>
<keyword id="KW-0521">NADP</keyword>
<keyword id="KW-0560">Oxidoreductase</keyword>
<organism>
    <name type="scientific">Shewanella baltica (strain OS223)</name>
    <dbReference type="NCBI Taxonomy" id="407976"/>
    <lineage>
        <taxon>Bacteria</taxon>
        <taxon>Pseudomonadati</taxon>
        <taxon>Pseudomonadota</taxon>
        <taxon>Gammaproteobacteria</taxon>
        <taxon>Alteromonadales</taxon>
        <taxon>Shewanellaceae</taxon>
        <taxon>Shewanella</taxon>
    </lineage>
</organism>
<protein>
    <recommendedName>
        <fullName evidence="1">Sulfite reductase [NADPH] hemoprotein beta-component</fullName>
        <shortName evidence="1">SiR-HP</shortName>
        <shortName evidence="1">SiRHP</shortName>
        <ecNumber evidence="1">1.8.1.2</ecNumber>
    </recommendedName>
</protein>
<accession>B8EE51</accession>
<comment type="function">
    <text evidence="1">Component of the sulfite reductase complex that catalyzes the 6-electron reduction of sulfite to sulfide. This is one of several activities required for the biosynthesis of L-cysteine from sulfate.</text>
</comment>
<comment type="catalytic activity">
    <reaction evidence="1">
        <text>hydrogen sulfide + 3 NADP(+) + 3 H2O = sulfite + 3 NADPH + 4 H(+)</text>
        <dbReference type="Rhea" id="RHEA:13801"/>
        <dbReference type="ChEBI" id="CHEBI:15377"/>
        <dbReference type="ChEBI" id="CHEBI:15378"/>
        <dbReference type="ChEBI" id="CHEBI:17359"/>
        <dbReference type="ChEBI" id="CHEBI:29919"/>
        <dbReference type="ChEBI" id="CHEBI:57783"/>
        <dbReference type="ChEBI" id="CHEBI:58349"/>
        <dbReference type="EC" id="1.8.1.2"/>
    </reaction>
</comment>
<comment type="cofactor">
    <cofactor evidence="1">
        <name>siroheme</name>
        <dbReference type="ChEBI" id="CHEBI:60052"/>
    </cofactor>
    <text evidence="1">Binds 1 siroheme per subunit.</text>
</comment>
<comment type="cofactor">
    <cofactor evidence="1">
        <name>[4Fe-4S] cluster</name>
        <dbReference type="ChEBI" id="CHEBI:49883"/>
    </cofactor>
    <text evidence="1">Binds 1 [4Fe-4S] cluster per subunit.</text>
</comment>
<comment type="pathway">
    <text evidence="1">Sulfur metabolism; hydrogen sulfide biosynthesis; hydrogen sulfide from sulfite (NADPH route): step 1/1.</text>
</comment>
<comment type="subunit">
    <text evidence="1">Alpha(8)-beta(8). The alpha component is a flavoprotein, the beta component is a hemoprotein.</text>
</comment>
<comment type="similarity">
    <text evidence="1">Belongs to the nitrite and sulfite reductase 4Fe-4S domain family.</text>
</comment>
<reference key="1">
    <citation type="submission" date="2008-12" db="EMBL/GenBank/DDBJ databases">
        <title>Complete sequence of chromosome of Shewanella baltica OS223.</title>
        <authorList>
            <consortium name="US DOE Joint Genome Institute"/>
            <person name="Lucas S."/>
            <person name="Copeland A."/>
            <person name="Lapidus A."/>
            <person name="Glavina del Rio T."/>
            <person name="Dalin E."/>
            <person name="Tice H."/>
            <person name="Bruce D."/>
            <person name="Goodwin L."/>
            <person name="Pitluck S."/>
            <person name="Chertkov O."/>
            <person name="Meincke L."/>
            <person name="Brettin T."/>
            <person name="Detter J.C."/>
            <person name="Han C."/>
            <person name="Kuske C.R."/>
            <person name="Larimer F."/>
            <person name="Land M."/>
            <person name="Hauser L."/>
            <person name="Kyrpides N."/>
            <person name="Ovchinnikova G."/>
            <person name="Brettar I."/>
            <person name="Rodrigues J."/>
            <person name="Konstantinidis K."/>
            <person name="Tiedje J."/>
        </authorList>
    </citation>
    <scope>NUCLEOTIDE SEQUENCE [LARGE SCALE GENOMIC DNA]</scope>
    <source>
        <strain>OS223</strain>
    </source>
</reference>
<sequence>MSEQKLALNEYLKTDSDYLRGTIKEGLDSAVTGSFSDGDQQLIKFHGFYQQDDRDLRNERKEQKLEPLYSFMLRARVPGGICSPQQWLGVDKIASTLTSSNSIRLTTRQTFQYHGIPKRNLKTIIQDLDREALDSIAACGDVNRNVMCNPNPVESKLHEQAYAVAKQLSDHLLPHTRAYAEIWLDEEKLLSTEDETVEPVYGKTYLPRKFKMAVAVPPDNDVDVYTNDLGFIAVAENGELVGFNLTAGGGMGSTHGEVETFPRLADDFGFIKTADVMKFAEAVMTVQRDWGNRVNRKRSRLKYTIVDHGYEKFKAEVELRAGVKFEPKRDVVIGDRGDRYGWVEGVDRKWHLTLFIESGRIKDLPGQTLQTGLREIAKIHKGDFRMTSNQNMIIAGVAAEDKATIEGLARKHGLLGQVLTQTRGHSIACVALPTCPLAMAEAERYFPEFIDHIDALQAKHGISEQAIVVRMTGCPNGCARPFAAEIGLVGKAPGRYNLYLGASFEGTRLNKMHRENIQEAEILAELDTLFGRYAVERDAGETFGNFTVRVGVVKAVIDAAKDFHG</sequence>
<proteinExistence type="inferred from homology"/>
<gene>
    <name evidence="1" type="primary">cysI</name>
    <name type="ordered locus">Sbal223_0945</name>
</gene>
<dbReference type="EC" id="1.8.1.2" evidence="1"/>
<dbReference type="EMBL" id="CP001252">
    <property type="protein sequence ID" value="ACK45463.1"/>
    <property type="molecule type" value="Genomic_DNA"/>
</dbReference>
<dbReference type="RefSeq" id="WP_012586918.1">
    <property type="nucleotide sequence ID" value="NC_011663.1"/>
</dbReference>
<dbReference type="SMR" id="B8EE51"/>
<dbReference type="KEGG" id="sbp:Sbal223_0945"/>
<dbReference type="HOGENOM" id="CLU_001975_3_2_6"/>
<dbReference type="UniPathway" id="UPA00140">
    <property type="reaction ID" value="UER00207"/>
</dbReference>
<dbReference type="Proteomes" id="UP000002507">
    <property type="component" value="Chromosome"/>
</dbReference>
<dbReference type="GO" id="GO:0009337">
    <property type="term" value="C:sulfite reductase complex (NADPH)"/>
    <property type="evidence" value="ECO:0007669"/>
    <property type="project" value="InterPro"/>
</dbReference>
<dbReference type="GO" id="GO:0051539">
    <property type="term" value="F:4 iron, 4 sulfur cluster binding"/>
    <property type="evidence" value="ECO:0007669"/>
    <property type="project" value="UniProtKB-KW"/>
</dbReference>
<dbReference type="GO" id="GO:0020037">
    <property type="term" value="F:heme binding"/>
    <property type="evidence" value="ECO:0007669"/>
    <property type="project" value="InterPro"/>
</dbReference>
<dbReference type="GO" id="GO:0046872">
    <property type="term" value="F:metal ion binding"/>
    <property type="evidence" value="ECO:0007669"/>
    <property type="project" value="UniProtKB-KW"/>
</dbReference>
<dbReference type="GO" id="GO:0050661">
    <property type="term" value="F:NADP binding"/>
    <property type="evidence" value="ECO:0007669"/>
    <property type="project" value="InterPro"/>
</dbReference>
<dbReference type="GO" id="GO:0050311">
    <property type="term" value="F:sulfite reductase (ferredoxin) activity"/>
    <property type="evidence" value="ECO:0007669"/>
    <property type="project" value="TreeGrafter"/>
</dbReference>
<dbReference type="GO" id="GO:0004783">
    <property type="term" value="F:sulfite reductase (NADPH) activity"/>
    <property type="evidence" value="ECO:0007669"/>
    <property type="project" value="UniProtKB-UniRule"/>
</dbReference>
<dbReference type="GO" id="GO:0019344">
    <property type="term" value="P:cysteine biosynthetic process"/>
    <property type="evidence" value="ECO:0007669"/>
    <property type="project" value="UniProtKB-KW"/>
</dbReference>
<dbReference type="GO" id="GO:0070814">
    <property type="term" value="P:hydrogen sulfide biosynthetic process"/>
    <property type="evidence" value="ECO:0007669"/>
    <property type="project" value="UniProtKB-UniRule"/>
</dbReference>
<dbReference type="GO" id="GO:0000103">
    <property type="term" value="P:sulfate assimilation"/>
    <property type="evidence" value="ECO:0007669"/>
    <property type="project" value="UniProtKB-UniRule"/>
</dbReference>
<dbReference type="FunFam" id="3.30.413.10:FF:000003">
    <property type="entry name" value="Sulfite reductase [NADPH] hemoprotein beta-component"/>
    <property type="match status" value="1"/>
</dbReference>
<dbReference type="FunFam" id="3.30.413.10:FF:000004">
    <property type="entry name" value="Sulfite reductase [NADPH] hemoprotein beta-component"/>
    <property type="match status" value="1"/>
</dbReference>
<dbReference type="Gene3D" id="3.30.413.10">
    <property type="entry name" value="Sulfite Reductase Hemoprotein, domain 1"/>
    <property type="match status" value="2"/>
</dbReference>
<dbReference type="HAMAP" id="MF_01540">
    <property type="entry name" value="CysI"/>
    <property type="match status" value="1"/>
</dbReference>
<dbReference type="InterPro" id="IPR011786">
    <property type="entry name" value="CysI"/>
</dbReference>
<dbReference type="InterPro" id="IPR005117">
    <property type="entry name" value="NiRdtase/SiRdtase_haem-b_fer"/>
</dbReference>
<dbReference type="InterPro" id="IPR036136">
    <property type="entry name" value="Nit/Sulf_reduc_fer-like_dom_sf"/>
</dbReference>
<dbReference type="InterPro" id="IPR006067">
    <property type="entry name" value="NO2/SO3_Rdtase_4Fe4S_dom"/>
</dbReference>
<dbReference type="InterPro" id="IPR045169">
    <property type="entry name" value="NO2/SO3_Rdtase_4Fe4S_prot"/>
</dbReference>
<dbReference type="InterPro" id="IPR045854">
    <property type="entry name" value="NO2/SO3_Rdtase_4Fe4S_sf"/>
</dbReference>
<dbReference type="InterPro" id="IPR006066">
    <property type="entry name" value="NO2/SO3_Rdtase_FeS/sirohaem_BS"/>
</dbReference>
<dbReference type="NCBIfam" id="TIGR02041">
    <property type="entry name" value="CysI"/>
    <property type="match status" value="1"/>
</dbReference>
<dbReference type="NCBIfam" id="NF010029">
    <property type="entry name" value="PRK13504.1"/>
    <property type="match status" value="1"/>
</dbReference>
<dbReference type="PANTHER" id="PTHR11493:SF47">
    <property type="entry name" value="SULFITE REDUCTASE [NADPH] SUBUNIT BETA"/>
    <property type="match status" value="1"/>
</dbReference>
<dbReference type="PANTHER" id="PTHR11493">
    <property type="entry name" value="SULFITE REDUCTASE [NADPH] SUBUNIT BETA-RELATED"/>
    <property type="match status" value="1"/>
</dbReference>
<dbReference type="Pfam" id="PF01077">
    <property type="entry name" value="NIR_SIR"/>
    <property type="match status" value="1"/>
</dbReference>
<dbReference type="Pfam" id="PF03460">
    <property type="entry name" value="NIR_SIR_ferr"/>
    <property type="match status" value="2"/>
</dbReference>
<dbReference type="PRINTS" id="PR00397">
    <property type="entry name" value="SIROHAEM"/>
</dbReference>
<dbReference type="SUPFAM" id="SSF56014">
    <property type="entry name" value="Nitrite and sulphite reductase 4Fe-4S domain-like"/>
    <property type="match status" value="2"/>
</dbReference>
<dbReference type="SUPFAM" id="SSF55124">
    <property type="entry name" value="Nitrite/Sulfite reductase N-terminal domain-like"/>
    <property type="match status" value="2"/>
</dbReference>
<dbReference type="PROSITE" id="PS00365">
    <property type="entry name" value="NIR_SIR"/>
    <property type="match status" value="1"/>
</dbReference>
<name>CYSI_SHEB2</name>
<evidence type="ECO:0000255" key="1">
    <source>
        <dbReference type="HAMAP-Rule" id="MF_01540"/>
    </source>
</evidence>
<feature type="chain" id="PRO_1000185234" description="Sulfite reductase [NADPH] hemoprotein beta-component">
    <location>
        <begin position="1"/>
        <end position="565"/>
    </location>
</feature>
<feature type="binding site" evidence="1">
    <location>
        <position position="429"/>
    </location>
    <ligand>
        <name>[4Fe-4S] cluster</name>
        <dbReference type="ChEBI" id="CHEBI:49883"/>
    </ligand>
</feature>
<feature type="binding site" evidence="1">
    <location>
        <position position="435"/>
    </location>
    <ligand>
        <name>[4Fe-4S] cluster</name>
        <dbReference type="ChEBI" id="CHEBI:49883"/>
    </ligand>
</feature>
<feature type="binding site" evidence="1">
    <location>
        <position position="474"/>
    </location>
    <ligand>
        <name>[4Fe-4S] cluster</name>
        <dbReference type="ChEBI" id="CHEBI:49883"/>
    </ligand>
</feature>
<feature type="binding site" evidence="1">
    <location>
        <position position="478"/>
    </location>
    <ligand>
        <name>[4Fe-4S] cluster</name>
        <dbReference type="ChEBI" id="CHEBI:49883"/>
    </ligand>
</feature>
<feature type="binding site" description="axial binding residue" evidence="1">
    <location>
        <position position="478"/>
    </location>
    <ligand>
        <name>siroheme</name>
        <dbReference type="ChEBI" id="CHEBI:60052"/>
    </ligand>
    <ligandPart>
        <name>Fe</name>
        <dbReference type="ChEBI" id="CHEBI:18248"/>
    </ligandPart>
</feature>